<accession>Q6FZH1</accession>
<name>DGTL1_BARQU</name>
<sequence length="400" mass="45988">MHISKINFNYQARAIYSANPQTSRGRLFYETMSTIRSPFQRDRDRIIHSNAFRRLKHKTQVFIADESDHYRTRLTHSIEVSQIARTLARALCLDEDLAEAIALAHDFGHTPFGHAGEDALNEAMAHYGGFDHNAQALRIVTKLEQRYANFDGLNLTWETLEGLVKHNGPLLGPYANNKDVPIDILQYNTKQDLKLNCFAGLEAQCAAIADDIAYNAHDIDDGLRSQFLTLGQFEQVSLTAVLLKDIEKEHPQLDKTRRGYELVRRQITTMVEDVIKQSQENLAHIKPTSISDVQQAEQTIVTFSPTMAVYEKELKNFLFKNLYYHDQVLSRRNAAKCIVQKLFDCYYKNPNVMPESWHSKTAHLTNQELARLIADFLSGMTDHYALREYQRLFDCTNNFV</sequence>
<organism>
    <name type="scientific">Bartonella quintana (strain Toulouse)</name>
    <name type="common">Rochalimaea quintana</name>
    <dbReference type="NCBI Taxonomy" id="283165"/>
    <lineage>
        <taxon>Bacteria</taxon>
        <taxon>Pseudomonadati</taxon>
        <taxon>Pseudomonadota</taxon>
        <taxon>Alphaproteobacteria</taxon>
        <taxon>Hyphomicrobiales</taxon>
        <taxon>Bartonellaceae</taxon>
        <taxon>Bartonella</taxon>
    </lineage>
</organism>
<dbReference type="EMBL" id="BX897700">
    <property type="protein sequence ID" value="CAF26253.1"/>
    <property type="molecule type" value="Genomic_DNA"/>
</dbReference>
<dbReference type="RefSeq" id="WP_011179504.1">
    <property type="nucleotide sequence ID" value="NC_005955.1"/>
</dbReference>
<dbReference type="SMR" id="Q6FZH1"/>
<dbReference type="KEGG" id="bqu:BQ07690"/>
<dbReference type="eggNOG" id="COG0232">
    <property type="taxonomic scope" value="Bacteria"/>
</dbReference>
<dbReference type="HOGENOM" id="CLU_028163_1_0_5"/>
<dbReference type="OrthoDB" id="9803619at2"/>
<dbReference type="Proteomes" id="UP000000597">
    <property type="component" value="Chromosome"/>
</dbReference>
<dbReference type="GO" id="GO:0008832">
    <property type="term" value="F:dGTPase activity"/>
    <property type="evidence" value="ECO:0007669"/>
    <property type="project" value="TreeGrafter"/>
</dbReference>
<dbReference type="GO" id="GO:0006203">
    <property type="term" value="P:dGTP catabolic process"/>
    <property type="evidence" value="ECO:0007669"/>
    <property type="project" value="TreeGrafter"/>
</dbReference>
<dbReference type="CDD" id="cd00077">
    <property type="entry name" value="HDc"/>
    <property type="match status" value="1"/>
</dbReference>
<dbReference type="Gene3D" id="1.10.3210.10">
    <property type="entry name" value="Hypothetical protein af1432"/>
    <property type="match status" value="1"/>
</dbReference>
<dbReference type="HAMAP" id="MF_01212">
    <property type="entry name" value="dGTPase_type2"/>
    <property type="match status" value="1"/>
</dbReference>
<dbReference type="InterPro" id="IPR006261">
    <property type="entry name" value="dGTPase"/>
</dbReference>
<dbReference type="InterPro" id="IPR050135">
    <property type="entry name" value="dGTPase-like"/>
</dbReference>
<dbReference type="InterPro" id="IPR023023">
    <property type="entry name" value="dNTPase_2"/>
</dbReference>
<dbReference type="InterPro" id="IPR003607">
    <property type="entry name" value="HD/PDEase_dom"/>
</dbReference>
<dbReference type="InterPro" id="IPR006674">
    <property type="entry name" value="HD_domain"/>
</dbReference>
<dbReference type="InterPro" id="IPR026875">
    <property type="entry name" value="PHydrolase_assoc_dom"/>
</dbReference>
<dbReference type="NCBIfam" id="TIGR01353">
    <property type="entry name" value="dGTP_triPase"/>
    <property type="match status" value="1"/>
</dbReference>
<dbReference type="NCBIfam" id="NF002326">
    <property type="entry name" value="PRK01286.1-1"/>
    <property type="match status" value="1"/>
</dbReference>
<dbReference type="NCBIfam" id="NF002328">
    <property type="entry name" value="PRK01286.1-3"/>
    <property type="match status" value="1"/>
</dbReference>
<dbReference type="PANTHER" id="PTHR11373:SF43">
    <property type="entry name" value="DEOXYGUANOSINETRIPHOSPHATE TRIPHOSPHOHYDROLASE-LIKE PROTEIN"/>
    <property type="match status" value="1"/>
</dbReference>
<dbReference type="PANTHER" id="PTHR11373">
    <property type="entry name" value="DEOXYNUCLEOSIDE TRIPHOSPHATE TRIPHOSPHOHYDROLASE"/>
    <property type="match status" value="1"/>
</dbReference>
<dbReference type="Pfam" id="PF01966">
    <property type="entry name" value="HD"/>
    <property type="match status" value="1"/>
</dbReference>
<dbReference type="Pfam" id="PF13286">
    <property type="entry name" value="HD_assoc"/>
    <property type="match status" value="1"/>
</dbReference>
<dbReference type="SMART" id="SM00471">
    <property type="entry name" value="HDc"/>
    <property type="match status" value="1"/>
</dbReference>
<dbReference type="SUPFAM" id="SSF109604">
    <property type="entry name" value="HD-domain/PDEase-like"/>
    <property type="match status" value="1"/>
</dbReference>
<dbReference type="PROSITE" id="PS51831">
    <property type="entry name" value="HD"/>
    <property type="match status" value="1"/>
</dbReference>
<keyword id="KW-0378">Hydrolase</keyword>
<feature type="chain" id="PRO_1000085568" description="Deoxyguanosinetriphosphate triphosphohydrolase-like protein">
    <location>
        <begin position="1"/>
        <end position="400"/>
    </location>
</feature>
<feature type="domain" description="HD" evidence="2">
    <location>
        <begin position="73"/>
        <end position="215"/>
    </location>
</feature>
<comment type="similarity">
    <text evidence="1">Belongs to the dGTPase family. Type 2 subfamily.</text>
</comment>
<protein>
    <recommendedName>
        <fullName evidence="1">Deoxyguanosinetriphosphate triphosphohydrolase-like protein</fullName>
    </recommendedName>
</protein>
<evidence type="ECO:0000255" key="1">
    <source>
        <dbReference type="HAMAP-Rule" id="MF_01212"/>
    </source>
</evidence>
<evidence type="ECO:0000255" key="2">
    <source>
        <dbReference type="PROSITE-ProRule" id="PRU01175"/>
    </source>
</evidence>
<proteinExistence type="inferred from homology"/>
<gene>
    <name type="ordered locus">BQ07690</name>
</gene>
<reference key="1">
    <citation type="journal article" date="2004" name="Proc. Natl. Acad. Sci. U.S.A.">
        <title>The louse-borne human pathogen Bartonella quintana is a genomic derivative of the zoonotic agent Bartonella henselae.</title>
        <authorList>
            <person name="Alsmark U.C.M."/>
            <person name="Frank A.C."/>
            <person name="Karlberg E.O."/>
            <person name="Legault B.-A."/>
            <person name="Ardell D.H."/>
            <person name="Canbaeck B."/>
            <person name="Eriksson A.-S."/>
            <person name="Naeslund A.K."/>
            <person name="Handley S.A."/>
            <person name="Huvet M."/>
            <person name="La Scola B."/>
            <person name="Holmberg M."/>
            <person name="Andersson S.G.E."/>
        </authorList>
    </citation>
    <scope>NUCLEOTIDE SEQUENCE [LARGE SCALE GENOMIC DNA]</scope>
    <source>
        <strain>Toulouse</strain>
    </source>
</reference>